<sequence length="186" mass="21593">MGRYSRESDNVAKSCKARGPNLRVHFKNTHETAQAIKRMPLRRAQRYLKAVIDQKECVPFRRFNGGVGRCAQAKQWKTTQGRWPKKSAEFLLQLLRNAEANADCKGLDADRLVVHHIQVNRAQCLRRRTYRAHGRINPYMSSPCHVEVILTEKEELVSKATDDEPAKKKLSKKKLQRQKEKMLRSE</sequence>
<keyword id="KW-0002">3D-structure</keyword>
<keyword id="KW-0597">Phosphoprotein</keyword>
<keyword id="KW-1185">Reference proteome</keyword>
<keyword id="KW-0687">Ribonucleoprotein</keyword>
<keyword id="KW-0689">Ribosomal protein</keyword>
<name>RL17_DROME</name>
<accession>Q9W3W8</accession>
<proteinExistence type="evidence at protein level"/>
<feature type="chain" id="PRO_0000323412" description="Large ribosomal subunit protein uL22">
    <location>
        <begin position="1"/>
        <end position="186"/>
    </location>
</feature>
<feature type="region of interest" description="Disordered" evidence="1">
    <location>
        <begin position="159"/>
        <end position="186"/>
    </location>
</feature>
<feature type="compositionally biased region" description="Basic and acidic residues" evidence="1">
    <location>
        <begin position="177"/>
        <end position="186"/>
    </location>
</feature>
<feature type="modified residue" description="Phosphoserine" evidence="2">
    <location>
        <position position="158"/>
    </location>
</feature>
<feature type="modified residue" description="Phosphothreonine" evidence="2">
    <location>
        <position position="161"/>
    </location>
</feature>
<comment type="similarity">
    <text evidence="3">Belongs to the universal ribosomal protein uL22 family.</text>
</comment>
<organism>
    <name type="scientific">Drosophila melanogaster</name>
    <name type="common">Fruit fly</name>
    <dbReference type="NCBI Taxonomy" id="7227"/>
    <lineage>
        <taxon>Eukaryota</taxon>
        <taxon>Metazoa</taxon>
        <taxon>Ecdysozoa</taxon>
        <taxon>Arthropoda</taxon>
        <taxon>Hexapoda</taxon>
        <taxon>Insecta</taxon>
        <taxon>Pterygota</taxon>
        <taxon>Neoptera</taxon>
        <taxon>Endopterygota</taxon>
        <taxon>Diptera</taxon>
        <taxon>Brachycera</taxon>
        <taxon>Muscomorpha</taxon>
        <taxon>Ephydroidea</taxon>
        <taxon>Drosophilidae</taxon>
        <taxon>Drosophila</taxon>
        <taxon>Sophophora</taxon>
    </lineage>
</organism>
<reference key="1">
    <citation type="journal article" date="2000" name="Science">
        <title>The genome sequence of Drosophila melanogaster.</title>
        <authorList>
            <person name="Adams M.D."/>
            <person name="Celniker S.E."/>
            <person name="Holt R.A."/>
            <person name="Evans C.A."/>
            <person name="Gocayne J.D."/>
            <person name="Amanatides P.G."/>
            <person name="Scherer S.E."/>
            <person name="Li P.W."/>
            <person name="Hoskins R.A."/>
            <person name="Galle R.F."/>
            <person name="George R.A."/>
            <person name="Lewis S.E."/>
            <person name="Richards S."/>
            <person name="Ashburner M."/>
            <person name="Henderson S.N."/>
            <person name="Sutton G.G."/>
            <person name="Wortman J.R."/>
            <person name="Yandell M.D."/>
            <person name="Zhang Q."/>
            <person name="Chen L.X."/>
            <person name="Brandon R.C."/>
            <person name="Rogers Y.-H.C."/>
            <person name="Blazej R.G."/>
            <person name="Champe M."/>
            <person name="Pfeiffer B.D."/>
            <person name="Wan K.H."/>
            <person name="Doyle C."/>
            <person name="Baxter E.G."/>
            <person name="Helt G."/>
            <person name="Nelson C.R."/>
            <person name="Miklos G.L.G."/>
            <person name="Abril J.F."/>
            <person name="Agbayani A."/>
            <person name="An H.-J."/>
            <person name="Andrews-Pfannkoch C."/>
            <person name="Baldwin D."/>
            <person name="Ballew R.M."/>
            <person name="Basu A."/>
            <person name="Baxendale J."/>
            <person name="Bayraktaroglu L."/>
            <person name="Beasley E.M."/>
            <person name="Beeson K.Y."/>
            <person name="Benos P.V."/>
            <person name="Berman B.P."/>
            <person name="Bhandari D."/>
            <person name="Bolshakov S."/>
            <person name="Borkova D."/>
            <person name="Botchan M.R."/>
            <person name="Bouck J."/>
            <person name="Brokstein P."/>
            <person name="Brottier P."/>
            <person name="Burtis K.C."/>
            <person name="Busam D.A."/>
            <person name="Butler H."/>
            <person name="Cadieu E."/>
            <person name="Center A."/>
            <person name="Chandra I."/>
            <person name="Cherry J.M."/>
            <person name="Cawley S."/>
            <person name="Dahlke C."/>
            <person name="Davenport L.B."/>
            <person name="Davies P."/>
            <person name="de Pablos B."/>
            <person name="Delcher A."/>
            <person name="Deng Z."/>
            <person name="Mays A.D."/>
            <person name="Dew I."/>
            <person name="Dietz S.M."/>
            <person name="Dodson K."/>
            <person name="Doup L.E."/>
            <person name="Downes M."/>
            <person name="Dugan-Rocha S."/>
            <person name="Dunkov B.C."/>
            <person name="Dunn P."/>
            <person name="Durbin K.J."/>
            <person name="Evangelista C.C."/>
            <person name="Ferraz C."/>
            <person name="Ferriera S."/>
            <person name="Fleischmann W."/>
            <person name="Fosler C."/>
            <person name="Gabrielian A.E."/>
            <person name="Garg N.S."/>
            <person name="Gelbart W.M."/>
            <person name="Glasser K."/>
            <person name="Glodek A."/>
            <person name="Gong F."/>
            <person name="Gorrell J.H."/>
            <person name="Gu Z."/>
            <person name="Guan P."/>
            <person name="Harris M."/>
            <person name="Harris N.L."/>
            <person name="Harvey D.A."/>
            <person name="Heiman T.J."/>
            <person name="Hernandez J.R."/>
            <person name="Houck J."/>
            <person name="Hostin D."/>
            <person name="Houston K.A."/>
            <person name="Howland T.J."/>
            <person name="Wei M.-H."/>
            <person name="Ibegwam C."/>
            <person name="Jalali M."/>
            <person name="Kalush F."/>
            <person name="Karpen G.H."/>
            <person name="Ke Z."/>
            <person name="Kennison J.A."/>
            <person name="Ketchum K.A."/>
            <person name="Kimmel B.E."/>
            <person name="Kodira C.D."/>
            <person name="Kraft C.L."/>
            <person name="Kravitz S."/>
            <person name="Kulp D."/>
            <person name="Lai Z."/>
            <person name="Lasko P."/>
            <person name="Lei Y."/>
            <person name="Levitsky A.A."/>
            <person name="Li J.H."/>
            <person name="Li Z."/>
            <person name="Liang Y."/>
            <person name="Lin X."/>
            <person name="Liu X."/>
            <person name="Mattei B."/>
            <person name="McIntosh T.C."/>
            <person name="McLeod M.P."/>
            <person name="McPherson D."/>
            <person name="Merkulov G."/>
            <person name="Milshina N.V."/>
            <person name="Mobarry C."/>
            <person name="Morris J."/>
            <person name="Moshrefi A."/>
            <person name="Mount S.M."/>
            <person name="Moy M."/>
            <person name="Murphy B."/>
            <person name="Murphy L."/>
            <person name="Muzny D.M."/>
            <person name="Nelson D.L."/>
            <person name="Nelson D.R."/>
            <person name="Nelson K.A."/>
            <person name="Nixon K."/>
            <person name="Nusskern D.R."/>
            <person name="Pacleb J.M."/>
            <person name="Palazzolo M."/>
            <person name="Pittman G.S."/>
            <person name="Pan S."/>
            <person name="Pollard J."/>
            <person name="Puri V."/>
            <person name="Reese M.G."/>
            <person name="Reinert K."/>
            <person name="Remington K."/>
            <person name="Saunders R.D.C."/>
            <person name="Scheeler F."/>
            <person name="Shen H."/>
            <person name="Shue B.C."/>
            <person name="Siden-Kiamos I."/>
            <person name="Simpson M."/>
            <person name="Skupski M.P."/>
            <person name="Smith T.J."/>
            <person name="Spier E."/>
            <person name="Spradling A.C."/>
            <person name="Stapleton M."/>
            <person name="Strong R."/>
            <person name="Sun E."/>
            <person name="Svirskas R."/>
            <person name="Tector C."/>
            <person name="Turner R."/>
            <person name="Venter E."/>
            <person name="Wang A.H."/>
            <person name="Wang X."/>
            <person name="Wang Z.-Y."/>
            <person name="Wassarman D.A."/>
            <person name="Weinstock G.M."/>
            <person name="Weissenbach J."/>
            <person name="Williams S.M."/>
            <person name="Woodage T."/>
            <person name="Worley K.C."/>
            <person name="Wu D."/>
            <person name="Yang S."/>
            <person name="Yao Q.A."/>
            <person name="Ye J."/>
            <person name="Yeh R.-F."/>
            <person name="Zaveri J.S."/>
            <person name="Zhan M."/>
            <person name="Zhang G."/>
            <person name="Zhao Q."/>
            <person name="Zheng L."/>
            <person name="Zheng X.H."/>
            <person name="Zhong F.N."/>
            <person name="Zhong W."/>
            <person name="Zhou X."/>
            <person name="Zhu S.C."/>
            <person name="Zhu X."/>
            <person name="Smith H.O."/>
            <person name="Gibbs R.A."/>
            <person name="Myers E.W."/>
            <person name="Rubin G.M."/>
            <person name="Venter J.C."/>
        </authorList>
    </citation>
    <scope>NUCLEOTIDE SEQUENCE [LARGE SCALE GENOMIC DNA]</scope>
    <source>
        <strain>Berkeley</strain>
    </source>
</reference>
<reference key="2">
    <citation type="journal article" date="2002" name="Genome Biol.">
        <title>Annotation of the Drosophila melanogaster euchromatic genome: a systematic review.</title>
        <authorList>
            <person name="Misra S."/>
            <person name="Crosby M.A."/>
            <person name="Mungall C.J."/>
            <person name="Matthews B.B."/>
            <person name="Campbell K.S."/>
            <person name="Hradecky P."/>
            <person name="Huang Y."/>
            <person name="Kaminker J.S."/>
            <person name="Millburn G.H."/>
            <person name="Prochnik S.E."/>
            <person name="Smith C.D."/>
            <person name="Tupy J.L."/>
            <person name="Whitfield E.J."/>
            <person name="Bayraktaroglu L."/>
            <person name="Berman B.P."/>
            <person name="Bettencourt B.R."/>
            <person name="Celniker S.E."/>
            <person name="de Grey A.D.N.J."/>
            <person name="Drysdale R.A."/>
            <person name="Harris N.L."/>
            <person name="Richter J."/>
            <person name="Russo S."/>
            <person name="Schroeder A.J."/>
            <person name="Shu S.Q."/>
            <person name="Stapleton M."/>
            <person name="Yamada C."/>
            <person name="Ashburner M."/>
            <person name="Gelbart W.M."/>
            <person name="Rubin G.M."/>
            <person name="Lewis S.E."/>
        </authorList>
    </citation>
    <scope>GENOME REANNOTATION</scope>
    <source>
        <strain>Berkeley</strain>
    </source>
</reference>
<reference key="3">
    <citation type="submission" date="2001-10" db="EMBL/GenBank/DDBJ databases">
        <authorList>
            <person name="Stapleton M."/>
            <person name="Brokstein P."/>
            <person name="Hong L."/>
            <person name="Agbayani A."/>
            <person name="Carlson J.W."/>
            <person name="Champe M."/>
            <person name="Chavez C."/>
            <person name="Dorsett V."/>
            <person name="Dresnek D."/>
            <person name="Farfan D."/>
            <person name="Frise E."/>
            <person name="George R.A."/>
            <person name="Gonzalez M."/>
            <person name="Guarin H."/>
            <person name="Kronmiller B."/>
            <person name="Li P.W."/>
            <person name="Liao G."/>
            <person name="Miranda A."/>
            <person name="Mungall C.J."/>
            <person name="Nunoo J."/>
            <person name="Pacleb J.M."/>
            <person name="Paragas V."/>
            <person name="Park S."/>
            <person name="Patel S."/>
            <person name="Phouanenavong S."/>
            <person name="Wan K.H."/>
            <person name="Yu C."/>
            <person name="Lewis S.E."/>
            <person name="Rubin G.M."/>
            <person name="Celniker S.E."/>
        </authorList>
    </citation>
    <scope>NUCLEOTIDE SEQUENCE [LARGE SCALE MRNA]</scope>
    <source>
        <strain>Berkeley</strain>
        <tissue>Ovary</tissue>
    </source>
</reference>
<reference key="4">
    <citation type="journal article" date="2008" name="J. Proteome Res.">
        <title>Phosphoproteome analysis of Drosophila melanogaster embryos.</title>
        <authorList>
            <person name="Zhai B."/>
            <person name="Villen J."/>
            <person name="Beausoleil S.A."/>
            <person name="Mintseris J."/>
            <person name="Gygi S.P."/>
        </authorList>
    </citation>
    <scope>PHOSPHORYLATION [LARGE SCALE ANALYSIS] AT SER-158 AND THR-161</scope>
    <scope>IDENTIFICATION BY MASS SPECTROMETRY</scope>
    <source>
        <tissue>Embryo</tissue>
    </source>
</reference>
<reference key="5">
    <citation type="journal article" date="2013" name="Nature">
        <title>Structures of the human and Drosophila 80S ribosome.</title>
        <authorList>
            <person name="Anger A.M."/>
            <person name="Armache J.P."/>
            <person name="Berninghausen O."/>
            <person name="Habeck M."/>
            <person name="Subklewe M."/>
            <person name="Wilson D.N."/>
            <person name="Beckmann R."/>
        </authorList>
    </citation>
    <scope>STRUCTURE BY ELECTRON MICROSCOPY (6.0 ANGSTROMS) OF THE 80S RIBOSOME</scope>
</reference>
<evidence type="ECO:0000256" key="1">
    <source>
        <dbReference type="SAM" id="MobiDB-lite"/>
    </source>
</evidence>
<evidence type="ECO:0000269" key="2">
    <source>
    </source>
</evidence>
<evidence type="ECO:0000305" key="3"/>
<protein>
    <recommendedName>
        <fullName evidence="3">Large ribosomal subunit protein uL22</fullName>
    </recommendedName>
    <alternativeName>
        <fullName>60S ribosomal protein L17</fullName>
    </alternativeName>
</protein>
<dbReference type="EMBL" id="AE014298">
    <property type="protein sequence ID" value="AAF46194.1"/>
    <property type="molecule type" value="Genomic_DNA"/>
</dbReference>
<dbReference type="EMBL" id="AE014298">
    <property type="protein sequence ID" value="AAF46195.1"/>
    <property type="molecule type" value="Genomic_DNA"/>
</dbReference>
<dbReference type="EMBL" id="AE014298">
    <property type="protein sequence ID" value="AAN09182.1"/>
    <property type="molecule type" value="Genomic_DNA"/>
</dbReference>
<dbReference type="EMBL" id="AE014298">
    <property type="protein sequence ID" value="AAN09183.1"/>
    <property type="molecule type" value="Genomic_DNA"/>
</dbReference>
<dbReference type="EMBL" id="AY060845">
    <property type="protein sequence ID" value="AAL28393.1"/>
    <property type="molecule type" value="mRNA"/>
</dbReference>
<dbReference type="RefSeq" id="NP_001284961.1">
    <property type="nucleotide sequence ID" value="NM_001298032.1"/>
</dbReference>
<dbReference type="RefSeq" id="NP_572346.1">
    <property type="nucleotide sequence ID" value="NM_132118.3"/>
</dbReference>
<dbReference type="RefSeq" id="NP_727118.1">
    <property type="nucleotide sequence ID" value="NM_167087.1"/>
</dbReference>
<dbReference type="RefSeq" id="NP_727119.1">
    <property type="nucleotide sequence ID" value="NM_167088.2"/>
</dbReference>
<dbReference type="RefSeq" id="NP_727120.1">
    <property type="nucleotide sequence ID" value="NM_167089.2"/>
</dbReference>
<dbReference type="PDB" id="4V6W">
    <property type="method" value="EM"/>
    <property type="resolution" value="6.00 A"/>
    <property type="chains" value="CP=1-186"/>
</dbReference>
<dbReference type="PDB" id="6XU6">
    <property type="method" value="EM"/>
    <property type="resolution" value="3.50 A"/>
    <property type="chains" value="CP=2-186"/>
</dbReference>
<dbReference type="PDB" id="6XU7">
    <property type="method" value="EM"/>
    <property type="resolution" value="4.90 A"/>
    <property type="chains" value="CP=2-186"/>
</dbReference>
<dbReference type="PDB" id="6XU8">
    <property type="method" value="EM"/>
    <property type="resolution" value="3.00 A"/>
    <property type="chains" value="CP=2-186"/>
</dbReference>
<dbReference type="PDBsum" id="4V6W"/>
<dbReference type="PDBsum" id="6XU6"/>
<dbReference type="PDBsum" id="6XU7"/>
<dbReference type="PDBsum" id="6XU8"/>
<dbReference type="EMDB" id="EMD-10622"/>
<dbReference type="EMDB" id="EMD-10623"/>
<dbReference type="EMDB" id="EMD-10624"/>
<dbReference type="SMR" id="Q9W3W8"/>
<dbReference type="BioGRID" id="58099">
    <property type="interactions" value="122"/>
</dbReference>
<dbReference type="FunCoup" id="Q9W3W8">
    <property type="interactions" value="763"/>
</dbReference>
<dbReference type="IntAct" id="Q9W3W8">
    <property type="interactions" value="5"/>
</dbReference>
<dbReference type="MINT" id="Q9W3W8"/>
<dbReference type="STRING" id="7227.FBpp0070942"/>
<dbReference type="iPTMnet" id="Q9W3W8"/>
<dbReference type="PaxDb" id="7227-FBpp0070940"/>
<dbReference type="DNASU" id="31613"/>
<dbReference type="EnsemblMetazoa" id="FBtr0070980">
    <property type="protein sequence ID" value="FBpp0070940"/>
    <property type="gene ID" value="FBgn0029897"/>
</dbReference>
<dbReference type="EnsemblMetazoa" id="FBtr0070981">
    <property type="protein sequence ID" value="FBpp0070941"/>
    <property type="gene ID" value="FBgn0029897"/>
</dbReference>
<dbReference type="EnsemblMetazoa" id="FBtr0070982">
    <property type="protein sequence ID" value="FBpp0070942"/>
    <property type="gene ID" value="FBgn0029897"/>
</dbReference>
<dbReference type="EnsemblMetazoa" id="FBtr0070983">
    <property type="protein sequence ID" value="FBpp0070943"/>
    <property type="gene ID" value="FBgn0029897"/>
</dbReference>
<dbReference type="EnsemblMetazoa" id="FBtr0345292">
    <property type="protein sequence ID" value="FBpp0311459"/>
    <property type="gene ID" value="FBgn0029897"/>
</dbReference>
<dbReference type="GeneID" id="31613"/>
<dbReference type="KEGG" id="dme:Dmel_CG3203"/>
<dbReference type="AGR" id="FB:FBgn0029897"/>
<dbReference type="CTD" id="6139"/>
<dbReference type="FlyBase" id="FBgn0029897">
    <property type="gene designation" value="RpL17"/>
</dbReference>
<dbReference type="VEuPathDB" id="VectorBase:FBgn0029897"/>
<dbReference type="eggNOG" id="KOG3353">
    <property type="taxonomic scope" value="Eukaryota"/>
</dbReference>
<dbReference type="HOGENOM" id="CLU_083987_0_1_1"/>
<dbReference type="InParanoid" id="Q9W3W8"/>
<dbReference type="OMA" id="QVNHAPC"/>
<dbReference type="OrthoDB" id="10254664at2759"/>
<dbReference type="PhylomeDB" id="Q9W3W8"/>
<dbReference type="Reactome" id="R-DME-156827">
    <property type="pathway name" value="L13a-mediated translational silencing of Ceruloplasmin expression"/>
</dbReference>
<dbReference type="Reactome" id="R-DME-1799339">
    <property type="pathway name" value="SRP-dependent cotranslational protein targeting to membrane"/>
</dbReference>
<dbReference type="Reactome" id="R-DME-72689">
    <property type="pathway name" value="Formation of a pool of free 40S subunits"/>
</dbReference>
<dbReference type="Reactome" id="R-DME-72706">
    <property type="pathway name" value="GTP hydrolysis and joining of the 60S ribosomal subunit"/>
</dbReference>
<dbReference type="Reactome" id="R-DME-975956">
    <property type="pathway name" value="Nonsense Mediated Decay (NMD) independent of the Exon Junction Complex (EJC)"/>
</dbReference>
<dbReference type="Reactome" id="R-DME-975957">
    <property type="pathway name" value="Nonsense Mediated Decay (NMD) enhanced by the Exon Junction Complex (EJC)"/>
</dbReference>
<dbReference type="SignaLink" id="Q9W3W8"/>
<dbReference type="BioGRID-ORCS" id="31613">
    <property type="hits" value="1 hit in 3 CRISPR screens"/>
</dbReference>
<dbReference type="ChiTaRS" id="RpL17">
    <property type="organism name" value="fly"/>
</dbReference>
<dbReference type="GenomeRNAi" id="31613"/>
<dbReference type="PRO" id="PR:Q9W3W8"/>
<dbReference type="Proteomes" id="UP000000803">
    <property type="component" value="Chromosome X"/>
</dbReference>
<dbReference type="Bgee" id="FBgn0029897">
    <property type="expression patterns" value="Expressed in ovarian sheath cell (Drosophila) in ovary and 278 other cell types or tissues"/>
</dbReference>
<dbReference type="ExpressionAtlas" id="Q9W3W8">
    <property type="expression patterns" value="baseline and differential"/>
</dbReference>
<dbReference type="GO" id="GO:0022625">
    <property type="term" value="C:cytosolic large ribosomal subunit"/>
    <property type="evidence" value="ECO:0000318"/>
    <property type="project" value="GO_Central"/>
</dbReference>
<dbReference type="GO" id="GO:0022626">
    <property type="term" value="C:cytosolic ribosome"/>
    <property type="evidence" value="ECO:0000314"/>
    <property type="project" value="FlyBase"/>
</dbReference>
<dbReference type="GO" id="GO:0003735">
    <property type="term" value="F:structural constituent of ribosome"/>
    <property type="evidence" value="ECO:0000314"/>
    <property type="project" value="FlyBase"/>
</dbReference>
<dbReference type="GO" id="GO:0002181">
    <property type="term" value="P:cytoplasmic translation"/>
    <property type="evidence" value="ECO:0000318"/>
    <property type="project" value="GO_Central"/>
</dbReference>
<dbReference type="CDD" id="cd00336">
    <property type="entry name" value="Ribosomal_L22"/>
    <property type="match status" value="1"/>
</dbReference>
<dbReference type="FunFam" id="3.90.470.10:FF:000003">
    <property type="entry name" value="60S ribosomal protein L17"/>
    <property type="match status" value="1"/>
</dbReference>
<dbReference type="Gene3D" id="3.90.470.10">
    <property type="entry name" value="Ribosomal protein L22/L17"/>
    <property type="match status" value="1"/>
</dbReference>
<dbReference type="InterPro" id="IPR001063">
    <property type="entry name" value="Ribosomal_uL22"/>
</dbReference>
<dbReference type="InterPro" id="IPR018260">
    <property type="entry name" value="Ribosomal_uL22_CS"/>
</dbReference>
<dbReference type="InterPro" id="IPR005721">
    <property type="entry name" value="Ribosomal_uL22_euk/arc"/>
</dbReference>
<dbReference type="InterPro" id="IPR036394">
    <property type="entry name" value="Ribosomal_uL22_sf"/>
</dbReference>
<dbReference type="NCBIfam" id="NF003260">
    <property type="entry name" value="PRK04223.1"/>
    <property type="match status" value="1"/>
</dbReference>
<dbReference type="NCBIfam" id="TIGR01038">
    <property type="entry name" value="uL22_arch_euk"/>
    <property type="match status" value="1"/>
</dbReference>
<dbReference type="PANTHER" id="PTHR11593">
    <property type="entry name" value="60S RIBOSOMAL PROTEIN L17"/>
    <property type="match status" value="1"/>
</dbReference>
<dbReference type="PANTHER" id="PTHR11593:SF10">
    <property type="entry name" value="60S RIBOSOMAL PROTEIN L17"/>
    <property type="match status" value="1"/>
</dbReference>
<dbReference type="Pfam" id="PF00237">
    <property type="entry name" value="Ribosomal_L22"/>
    <property type="match status" value="1"/>
</dbReference>
<dbReference type="SUPFAM" id="SSF54843">
    <property type="entry name" value="Ribosomal protein L22"/>
    <property type="match status" value="1"/>
</dbReference>
<dbReference type="PROSITE" id="PS00464">
    <property type="entry name" value="RIBOSOMAL_L22"/>
    <property type="match status" value="1"/>
</dbReference>
<gene>
    <name type="primary">RpL17</name>
    <name type="ORF">CG3203</name>
</gene>